<accession>P92657</accession>
<proteinExistence type="inferred from homology"/>
<protein>
    <recommendedName>
        <fullName>Cytochrome b</fullName>
    </recommendedName>
    <alternativeName>
        <fullName>Complex III subunit 3</fullName>
    </alternativeName>
    <alternativeName>
        <fullName>Complex III subunit III</fullName>
    </alternativeName>
    <alternativeName>
        <fullName>Cytochrome b-c1 complex subunit 3</fullName>
    </alternativeName>
    <alternativeName>
        <fullName>Ubiquinol-cytochrome-c reductase complex cytochrome b subunit</fullName>
    </alternativeName>
</protein>
<organism>
    <name type="scientific">Monodon monoceros</name>
    <name type="common">Narwhal</name>
    <name type="synonym">Ceratodon monodon</name>
    <dbReference type="NCBI Taxonomy" id="40151"/>
    <lineage>
        <taxon>Eukaryota</taxon>
        <taxon>Metazoa</taxon>
        <taxon>Chordata</taxon>
        <taxon>Craniata</taxon>
        <taxon>Vertebrata</taxon>
        <taxon>Euteleostomi</taxon>
        <taxon>Mammalia</taxon>
        <taxon>Eutheria</taxon>
        <taxon>Laurasiatheria</taxon>
        <taxon>Artiodactyla</taxon>
        <taxon>Whippomorpha</taxon>
        <taxon>Cetacea</taxon>
        <taxon>Odontoceti</taxon>
        <taxon>Monodontidae</taxon>
        <taxon>Monodon</taxon>
    </lineage>
</organism>
<reference key="1">
    <citation type="journal article" date="1996" name="Genetics">
        <title>Effects of character weighting and species sampling on phylogeny reconstruction: a case study based on DNA sequence data in cetaceans.</title>
        <authorList>
            <person name="Milinkovitch M.C."/>
            <person name="LeDuc R.G."/>
            <person name="Adachi J."/>
            <person name="Farnir F."/>
            <person name="Georges M."/>
            <person name="Hasegawa M."/>
        </authorList>
    </citation>
    <scope>NUCLEOTIDE SEQUENCE [GENOMIC DNA]</scope>
</reference>
<gene>
    <name type="primary">MT-CYB</name>
    <name type="synonym">COB</name>
    <name type="synonym">CYTB</name>
    <name type="synonym">MTCYB</name>
</gene>
<comment type="function">
    <text evidence="2">Component of the ubiquinol-cytochrome c reductase complex (complex III or cytochrome b-c1 complex) that is part of the mitochondrial respiratory chain. The b-c1 complex mediates electron transfer from ubiquinol to cytochrome c. Contributes to the generation of a proton gradient across the mitochondrial membrane that is then used for ATP synthesis.</text>
</comment>
<comment type="cofactor">
    <cofactor evidence="2">
        <name>heme b</name>
        <dbReference type="ChEBI" id="CHEBI:60344"/>
    </cofactor>
    <text evidence="2">Binds 2 heme b groups non-covalently.</text>
</comment>
<comment type="subunit">
    <text evidence="2">The cytochrome bc1 complex contains 11 subunits: 3 respiratory subunits (MT-CYB, CYC1 and UQCRFS1), 2 core proteins (UQCRC1 and UQCRC2) and 6 low-molecular weight proteins (UQCRH/QCR6, UQCRB/QCR7, UQCRQ/QCR8, UQCR10/QCR9, UQCR11/QCR10 and a cleavage product of UQCRFS1). This cytochrome bc1 complex then forms a dimer.</text>
</comment>
<comment type="subcellular location">
    <subcellularLocation>
        <location evidence="2">Mitochondrion inner membrane</location>
        <topology evidence="2">Multi-pass membrane protein</topology>
    </subcellularLocation>
</comment>
<comment type="miscellaneous">
    <text evidence="1">Heme 1 (or BL or b562) is low-potential and absorbs at about 562 nm, and heme 2 (or BH or b566) is high-potential and absorbs at about 566 nm.</text>
</comment>
<comment type="similarity">
    <text evidence="3 4">Belongs to the cytochrome b family.</text>
</comment>
<comment type="caution">
    <text evidence="2">The full-length protein contains only eight transmembrane helices, not nine as predicted by bioinformatics tools.</text>
</comment>
<keyword id="KW-0249">Electron transport</keyword>
<keyword id="KW-0349">Heme</keyword>
<keyword id="KW-0408">Iron</keyword>
<keyword id="KW-0472">Membrane</keyword>
<keyword id="KW-0479">Metal-binding</keyword>
<keyword id="KW-0496">Mitochondrion</keyword>
<keyword id="KW-0999">Mitochondrion inner membrane</keyword>
<keyword id="KW-0679">Respiratory chain</keyword>
<keyword id="KW-0812">Transmembrane</keyword>
<keyword id="KW-1133">Transmembrane helix</keyword>
<keyword id="KW-0813">Transport</keyword>
<keyword id="KW-0830">Ubiquinone</keyword>
<dbReference type="EMBL" id="U72038">
    <property type="protein sequence ID" value="AAC31655.1"/>
    <property type="molecule type" value="Genomic_DNA"/>
</dbReference>
<dbReference type="SMR" id="P92657"/>
<dbReference type="Proteomes" id="UP000694561">
    <property type="component" value="Unplaced"/>
</dbReference>
<dbReference type="GO" id="GO:0005743">
    <property type="term" value="C:mitochondrial inner membrane"/>
    <property type="evidence" value="ECO:0007669"/>
    <property type="project" value="UniProtKB-SubCell"/>
</dbReference>
<dbReference type="GO" id="GO:0045275">
    <property type="term" value="C:respiratory chain complex III"/>
    <property type="evidence" value="ECO:0007669"/>
    <property type="project" value="InterPro"/>
</dbReference>
<dbReference type="GO" id="GO:0046872">
    <property type="term" value="F:metal ion binding"/>
    <property type="evidence" value="ECO:0007669"/>
    <property type="project" value="UniProtKB-KW"/>
</dbReference>
<dbReference type="GO" id="GO:0008121">
    <property type="term" value="F:ubiquinol-cytochrome-c reductase activity"/>
    <property type="evidence" value="ECO:0007669"/>
    <property type="project" value="InterPro"/>
</dbReference>
<dbReference type="GO" id="GO:0006122">
    <property type="term" value="P:mitochondrial electron transport, ubiquinol to cytochrome c"/>
    <property type="evidence" value="ECO:0007669"/>
    <property type="project" value="TreeGrafter"/>
</dbReference>
<dbReference type="CDD" id="cd00290">
    <property type="entry name" value="cytochrome_b_C"/>
    <property type="match status" value="1"/>
</dbReference>
<dbReference type="CDD" id="cd00284">
    <property type="entry name" value="Cytochrome_b_N"/>
    <property type="match status" value="1"/>
</dbReference>
<dbReference type="FunFam" id="1.20.810.10:FF:000002">
    <property type="entry name" value="Cytochrome b"/>
    <property type="match status" value="1"/>
</dbReference>
<dbReference type="Gene3D" id="1.20.810.10">
    <property type="entry name" value="Cytochrome Bc1 Complex, Chain C"/>
    <property type="match status" value="1"/>
</dbReference>
<dbReference type="InterPro" id="IPR005798">
    <property type="entry name" value="Cyt_b/b6_C"/>
</dbReference>
<dbReference type="InterPro" id="IPR036150">
    <property type="entry name" value="Cyt_b/b6_C_sf"/>
</dbReference>
<dbReference type="InterPro" id="IPR005797">
    <property type="entry name" value="Cyt_b/b6_N"/>
</dbReference>
<dbReference type="InterPro" id="IPR027387">
    <property type="entry name" value="Cytb/b6-like_sf"/>
</dbReference>
<dbReference type="InterPro" id="IPR030689">
    <property type="entry name" value="Cytochrome_b"/>
</dbReference>
<dbReference type="InterPro" id="IPR048260">
    <property type="entry name" value="Cytochrome_b_C_euk/bac"/>
</dbReference>
<dbReference type="InterPro" id="IPR048259">
    <property type="entry name" value="Cytochrome_b_N_euk/bac"/>
</dbReference>
<dbReference type="InterPro" id="IPR016174">
    <property type="entry name" value="Di-haem_cyt_TM"/>
</dbReference>
<dbReference type="PANTHER" id="PTHR19271">
    <property type="entry name" value="CYTOCHROME B"/>
    <property type="match status" value="1"/>
</dbReference>
<dbReference type="PANTHER" id="PTHR19271:SF16">
    <property type="entry name" value="CYTOCHROME B"/>
    <property type="match status" value="1"/>
</dbReference>
<dbReference type="Pfam" id="PF00032">
    <property type="entry name" value="Cytochrom_B_C"/>
    <property type="match status" value="1"/>
</dbReference>
<dbReference type="Pfam" id="PF00033">
    <property type="entry name" value="Cytochrome_B"/>
    <property type="match status" value="1"/>
</dbReference>
<dbReference type="PIRSF" id="PIRSF038885">
    <property type="entry name" value="COB"/>
    <property type="match status" value="1"/>
</dbReference>
<dbReference type="SUPFAM" id="SSF81648">
    <property type="entry name" value="a domain/subunit of cytochrome bc1 complex (Ubiquinol-cytochrome c reductase)"/>
    <property type="match status" value="1"/>
</dbReference>
<dbReference type="SUPFAM" id="SSF81342">
    <property type="entry name" value="Transmembrane di-heme cytochromes"/>
    <property type="match status" value="1"/>
</dbReference>
<dbReference type="PROSITE" id="PS51003">
    <property type="entry name" value="CYTB_CTER"/>
    <property type="match status" value="1"/>
</dbReference>
<dbReference type="PROSITE" id="PS51002">
    <property type="entry name" value="CYTB_NTER"/>
    <property type="match status" value="1"/>
</dbReference>
<name>CYB_MONMO</name>
<sequence length="379" mass="42847">MTNIRKTHPLMKILNSTFIDLPTPSNISSWWNFGSLLGLCLIMQILTGLFLAMHYTPDTSTAFSSVAHICRDVNYGWIIRYLHANGASMFFICLYTHIGRSLYYGSHTSQETWNIGVLLLLMIMATAFVGYVLPWGQMSFWGATVITNLLSAIPYIGNTLVEWIWGGFSVDKATLTRFFTFHFILPFIITALVAVHLLFLHETGSNNPTGIPSNMDMIPFHPYYTIKDMLGAFLLILILLAMTLLTPDLLGDPDNYTPANPLSTPAHIKPEWYFLFAYAILRSIPNKLGGVLALLLSILILLLIPMLQTSKQRSMMFRPFSQLLFWTLIADFLTLTWIGGQPVEHPYIIVGQLASILYFLLILVLMPMASLIENKLLKW</sequence>
<geneLocation type="mitochondrion"/>
<evidence type="ECO:0000250" key="1"/>
<evidence type="ECO:0000250" key="2">
    <source>
        <dbReference type="UniProtKB" id="P00157"/>
    </source>
</evidence>
<evidence type="ECO:0000255" key="3">
    <source>
        <dbReference type="PROSITE-ProRule" id="PRU00967"/>
    </source>
</evidence>
<evidence type="ECO:0000255" key="4">
    <source>
        <dbReference type="PROSITE-ProRule" id="PRU00968"/>
    </source>
</evidence>
<feature type="chain" id="PRO_0000061202" description="Cytochrome b">
    <location>
        <begin position="1"/>
        <end position="379"/>
    </location>
</feature>
<feature type="transmembrane region" description="Helical" evidence="2">
    <location>
        <begin position="33"/>
        <end position="53"/>
    </location>
</feature>
<feature type="transmembrane region" description="Helical" evidence="2">
    <location>
        <begin position="77"/>
        <end position="98"/>
    </location>
</feature>
<feature type="transmembrane region" description="Helical" evidence="2">
    <location>
        <begin position="113"/>
        <end position="133"/>
    </location>
</feature>
<feature type="transmembrane region" description="Helical" evidence="2">
    <location>
        <begin position="178"/>
        <end position="198"/>
    </location>
</feature>
<feature type="transmembrane region" description="Helical" evidence="2">
    <location>
        <begin position="226"/>
        <end position="246"/>
    </location>
</feature>
<feature type="transmembrane region" description="Helical" evidence="2">
    <location>
        <begin position="288"/>
        <end position="308"/>
    </location>
</feature>
<feature type="transmembrane region" description="Helical" evidence="2">
    <location>
        <begin position="320"/>
        <end position="340"/>
    </location>
</feature>
<feature type="transmembrane region" description="Helical" evidence="2">
    <location>
        <begin position="347"/>
        <end position="367"/>
    </location>
</feature>
<feature type="binding site" description="axial binding residue" evidence="2">
    <location>
        <position position="83"/>
    </location>
    <ligand>
        <name>heme b</name>
        <dbReference type="ChEBI" id="CHEBI:60344"/>
        <label>b562</label>
    </ligand>
    <ligandPart>
        <name>Fe</name>
        <dbReference type="ChEBI" id="CHEBI:18248"/>
    </ligandPart>
</feature>
<feature type="binding site" description="axial binding residue" evidence="2">
    <location>
        <position position="97"/>
    </location>
    <ligand>
        <name>heme b</name>
        <dbReference type="ChEBI" id="CHEBI:60344"/>
        <label>b566</label>
    </ligand>
    <ligandPart>
        <name>Fe</name>
        <dbReference type="ChEBI" id="CHEBI:18248"/>
    </ligandPart>
</feature>
<feature type="binding site" description="axial binding residue" evidence="2">
    <location>
        <position position="182"/>
    </location>
    <ligand>
        <name>heme b</name>
        <dbReference type="ChEBI" id="CHEBI:60344"/>
        <label>b562</label>
    </ligand>
    <ligandPart>
        <name>Fe</name>
        <dbReference type="ChEBI" id="CHEBI:18248"/>
    </ligandPart>
</feature>
<feature type="binding site" description="axial binding residue" evidence="2">
    <location>
        <position position="196"/>
    </location>
    <ligand>
        <name>heme b</name>
        <dbReference type="ChEBI" id="CHEBI:60344"/>
        <label>b566</label>
    </ligand>
    <ligandPart>
        <name>Fe</name>
        <dbReference type="ChEBI" id="CHEBI:18248"/>
    </ligandPart>
</feature>
<feature type="binding site" evidence="2">
    <location>
        <position position="201"/>
    </location>
    <ligand>
        <name>a ubiquinone</name>
        <dbReference type="ChEBI" id="CHEBI:16389"/>
    </ligand>
</feature>